<feature type="chain" id="PRO_1000055428" description="Large ribosomal subunit protein uL13">
    <location>
        <begin position="1"/>
        <end position="160"/>
    </location>
</feature>
<accession>A5CET5</accession>
<organism>
    <name type="scientific">Orientia tsutsugamushi (strain Boryong)</name>
    <name type="common">Rickettsia tsutsugamushi</name>
    <dbReference type="NCBI Taxonomy" id="357244"/>
    <lineage>
        <taxon>Bacteria</taxon>
        <taxon>Pseudomonadati</taxon>
        <taxon>Pseudomonadota</taxon>
        <taxon>Alphaproteobacteria</taxon>
        <taxon>Rickettsiales</taxon>
        <taxon>Rickettsiaceae</taxon>
        <taxon>Rickettsieae</taxon>
        <taxon>Orientia</taxon>
    </lineage>
</organism>
<dbReference type="EMBL" id="AM494475">
    <property type="protein sequence ID" value="CAM80739.1"/>
    <property type="molecule type" value="Genomic_DNA"/>
</dbReference>
<dbReference type="RefSeq" id="WP_011944989.1">
    <property type="nucleotide sequence ID" value="NC_009488.1"/>
</dbReference>
<dbReference type="SMR" id="A5CET5"/>
<dbReference type="KEGG" id="ots:OTBS_1644"/>
<dbReference type="eggNOG" id="COG0102">
    <property type="taxonomic scope" value="Bacteria"/>
</dbReference>
<dbReference type="HOGENOM" id="CLU_082184_2_2_5"/>
<dbReference type="Proteomes" id="UP000001565">
    <property type="component" value="Chromosome"/>
</dbReference>
<dbReference type="GO" id="GO:0022625">
    <property type="term" value="C:cytosolic large ribosomal subunit"/>
    <property type="evidence" value="ECO:0007669"/>
    <property type="project" value="TreeGrafter"/>
</dbReference>
<dbReference type="GO" id="GO:0003729">
    <property type="term" value="F:mRNA binding"/>
    <property type="evidence" value="ECO:0007669"/>
    <property type="project" value="TreeGrafter"/>
</dbReference>
<dbReference type="GO" id="GO:0003735">
    <property type="term" value="F:structural constituent of ribosome"/>
    <property type="evidence" value="ECO:0007669"/>
    <property type="project" value="InterPro"/>
</dbReference>
<dbReference type="GO" id="GO:0017148">
    <property type="term" value="P:negative regulation of translation"/>
    <property type="evidence" value="ECO:0007669"/>
    <property type="project" value="TreeGrafter"/>
</dbReference>
<dbReference type="GO" id="GO:0006412">
    <property type="term" value="P:translation"/>
    <property type="evidence" value="ECO:0007669"/>
    <property type="project" value="UniProtKB-UniRule"/>
</dbReference>
<dbReference type="CDD" id="cd00392">
    <property type="entry name" value="Ribosomal_L13"/>
    <property type="match status" value="1"/>
</dbReference>
<dbReference type="Gene3D" id="3.90.1180.10">
    <property type="entry name" value="Ribosomal protein L13"/>
    <property type="match status" value="1"/>
</dbReference>
<dbReference type="HAMAP" id="MF_01366">
    <property type="entry name" value="Ribosomal_uL13"/>
    <property type="match status" value="1"/>
</dbReference>
<dbReference type="InterPro" id="IPR005822">
    <property type="entry name" value="Ribosomal_uL13"/>
</dbReference>
<dbReference type="InterPro" id="IPR005823">
    <property type="entry name" value="Ribosomal_uL13_bac-type"/>
</dbReference>
<dbReference type="InterPro" id="IPR023563">
    <property type="entry name" value="Ribosomal_uL13_CS"/>
</dbReference>
<dbReference type="InterPro" id="IPR036899">
    <property type="entry name" value="Ribosomal_uL13_sf"/>
</dbReference>
<dbReference type="NCBIfam" id="TIGR01066">
    <property type="entry name" value="rplM_bact"/>
    <property type="match status" value="1"/>
</dbReference>
<dbReference type="PANTHER" id="PTHR11545:SF2">
    <property type="entry name" value="LARGE RIBOSOMAL SUBUNIT PROTEIN UL13M"/>
    <property type="match status" value="1"/>
</dbReference>
<dbReference type="PANTHER" id="PTHR11545">
    <property type="entry name" value="RIBOSOMAL PROTEIN L13"/>
    <property type="match status" value="1"/>
</dbReference>
<dbReference type="Pfam" id="PF00572">
    <property type="entry name" value="Ribosomal_L13"/>
    <property type="match status" value="1"/>
</dbReference>
<dbReference type="PIRSF" id="PIRSF002181">
    <property type="entry name" value="Ribosomal_L13"/>
    <property type="match status" value="1"/>
</dbReference>
<dbReference type="SUPFAM" id="SSF52161">
    <property type="entry name" value="Ribosomal protein L13"/>
    <property type="match status" value="1"/>
</dbReference>
<dbReference type="PROSITE" id="PS00783">
    <property type="entry name" value="RIBOSOMAL_L13"/>
    <property type="match status" value="1"/>
</dbReference>
<name>RL13_ORITB</name>
<sequence length="160" mass="17796">MKTYSAKPAEISKKWILIDATNLVLGRLAAKVAVVLRGKDKPTYTPHMDCGNNVIIINAEHVKLTGDKSNAKSGKFYYRHSGFPGGIKVTTAGKILQSNYPERIIQLAVKRMLPSNKLGRKQFSNLYVYKGQTHPHAAQTPVLYDFAGKNSKNIRNQNIV</sequence>
<proteinExistence type="inferred from homology"/>
<evidence type="ECO:0000255" key="1">
    <source>
        <dbReference type="HAMAP-Rule" id="MF_01366"/>
    </source>
</evidence>
<evidence type="ECO:0000305" key="2"/>
<comment type="function">
    <text evidence="1">This protein is one of the early assembly proteins of the 50S ribosomal subunit, although it is not seen to bind rRNA by itself. It is important during the early stages of 50S assembly.</text>
</comment>
<comment type="subunit">
    <text evidence="1">Part of the 50S ribosomal subunit.</text>
</comment>
<comment type="similarity">
    <text evidence="1">Belongs to the universal ribosomal protein uL13 family.</text>
</comment>
<keyword id="KW-1185">Reference proteome</keyword>
<keyword id="KW-0687">Ribonucleoprotein</keyword>
<keyword id="KW-0689">Ribosomal protein</keyword>
<reference key="1">
    <citation type="journal article" date="2007" name="Proc. Natl. Acad. Sci. U.S.A.">
        <title>The Orientia tsutsugamushi genome reveals massive proliferation of conjugative type IV secretion system and host-cell interaction genes.</title>
        <authorList>
            <person name="Cho N.-H."/>
            <person name="Kim H.-R."/>
            <person name="Lee J.-H."/>
            <person name="Kim S.-Y."/>
            <person name="Kim J."/>
            <person name="Cha S."/>
            <person name="Kim S.-Y."/>
            <person name="Darby A.C."/>
            <person name="Fuxelius H.-H."/>
            <person name="Yin J."/>
            <person name="Kim J.H."/>
            <person name="Kim J."/>
            <person name="Lee S.J."/>
            <person name="Koh Y.-S."/>
            <person name="Jang W.-J."/>
            <person name="Park K.-H."/>
            <person name="Andersson S.G.E."/>
            <person name="Choi M.-S."/>
            <person name="Kim I.-S."/>
        </authorList>
    </citation>
    <scope>NUCLEOTIDE SEQUENCE [LARGE SCALE GENOMIC DNA]</scope>
    <source>
        <strain>Boryong</strain>
    </source>
</reference>
<protein>
    <recommendedName>
        <fullName evidence="1">Large ribosomal subunit protein uL13</fullName>
    </recommendedName>
    <alternativeName>
        <fullName evidence="2">50S ribosomal protein L13</fullName>
    </alternativeName>
</protein>
<gene>
    <name evidence="1" type="primary">rplM</name>
    <name type="ordered locus">OTBS_1644</name>
</gene>